<proteinExistence type="evidence at protein level"/>
<keyword id="KW-0007">Acetylation</keyword>
<keyword id="KW-0143">Chaperone</keyword>
<keyword id="KW-0186">Copper</keyword>
<keyword id="KW-0963">Cytoplasm</keyword>
<keyword id="KW-1015">Disulfide bond</keyword>
<keyword id="KW-0479">Metal-binding</keyword>
<keyword id="KW-0496">Mitochondrion</keyword>
<keyword id="KW-1185">Reference proteome</keyword>
<sequence>MPGLAAASPAPPEAQEKKPLKPCCACPETKKARDACIIEKGEEHCGHLIEAHKECMRALGFKI</sequence>
<accession>P56394</accession>
<gene>
    <name type="primary">Cox17</name>
    <name type="synonym">Cox17a</name>
</gene>
<dbReference type="EMBL" id="AA168035">
    <property type="status" value="NOT_ANNOTATED_CDS"/>
    <property type="molecule type" value="mRNA"/>
</dbReference>
<dbReference type="EMBL" id="BC048668">
    <property type="protein sequence ID" value="AAH48668.1"/>
    <property type="molecule type" value="mRNA"/>
</dbReference>
<dbReference type="CCDS" id="CCDS28165.1"/>
<dbReference type="RefSeq" id="NP_001017429.1">
    <property type="nucleotide sequence ID" value="NM_001017429.2"/>
</dbReference>
<dbReference type="RefSeq" id="XP_006521813.1">
    <property type="nucleotide sequence ID" value="XM_006521750.5"/>
</dbReference>
<dbReference type="SMR" id="P56394"/>
<dbReference type="BioGRID" id="198839">
    <property type="interactions" value="7"/>
</dbReference>
<dbReference type="FunCoup" id="P56394">
    <property type="interactions" value="1788"/>
</dbReference>
<dbReference type="STRING" id="10090.ENSMUSP00000112386"/>
<dbReference type="GlyGen" id="P56394">
    <property type="glycosylation" value="1 site, 1 O-linked glycan (1 site)"/>
</dbReference>
<dbReference type="iPTMnet" id="P56394"/>
<dbReference type="PhosphoSitePlus" id="P56394"/>
<dbReference type="SwissPalm" id="P56394"/>
<dbReference type="jPOST" id="P56394"/>
<dbReference type="PaxDb" id="10090-ENSMUSP00000054086"/>
<dbReference type="PeptideAtlas" id="P56394"/>
<dbReference type="ProteomicsDB" id="283356"/>
<dbReference type="Pumba" id="P56394"/>
<dbReference type="DNASU" id="12856"/>
<dbReference type="Ensembl" id="ENSMUST00000050273.9">
    <property type="protein sequence ID" value="ENSMUSP00000054086.9"/>
    <property type="gene ID" value="ENSMUSG00000046516.12"/>
</dbReference>
<dbReference type="Ensembl" id="ENSMUST00000120495.2">
    <property type="protein sequence ID" value="ENSMUSP00000113430.2"/>
    <property type="gene ID" value="ENSMUSG00000046516.12"/>
</dbReference>
<dbReference type="Ensembl" id="ENSMUST00000249256.1">
    <property type="protein sequence ID" value="ENSMUSP00000159636.1"/>
    <property type="gene ID" value="ENSMUSG00000046516.12"/>
</dbReference>
<dbReference type="GeneID" id="12856"/>
<dbReference type="KEGG" id="mmu:12856"/>
<dbReference type="UCSC" id="uc007zet.1">
    <property type="organism name" value="mouse"/>
</dbReference>
<dbReference type="AGR" id="MGI:1333806"/>
<dbReference type="CTD" id="10063"/>
<dbReference type="MGI" id="MGI:1333806">
    <property type="gene designation" value="Cox17"/>
</dbReference>
<dbReference type="VEuPathDB" id="HostDB:ENSMUSG00000046516"/>
<dbReference type="VEuPathDB" id="HostDB:ENSMUSG00000095464"/>
<dbReference type="eggNOG" id="KOG3496">
    <property type="taxonomic scope" value="Eukaryota"/>
</dbReference>
<dbReference type="GeneTree" id="ENSGT00390000002329"/>
<dbReference type="HOGENOM" id="CLU_149618_1_3_1"/>
<dbReference type="InParanoid" id="P56394"/>
<dbReference type="OMA" id="QEACTKW"/>
<dbReference type="OrthoDB" id="1915887at2759"/>
<dbReference type="PhylomeDB" id="P56394"/>
<dbReference type="TreeFam" id="TF105074"/>
<dbReference type="Reactome" id="R-MMU-9864848">
    <property type="pathway name" value="Complex IV assembly"/>
</dbReference>
<dbReference type="BioGRID-ORCS" id="12856">
    <property type="hits" value="10 hits in 43 CRISPR screens"/>
</dbReference>
<dbReference type="ChiTaRS" id="Cox17">
    <property type="organism name" value="mouse"/>
</dbReference>
<dbReference type="PRO" id="PR:P56394"/>
<dbReference type="Proteomes" id="UP000000589">
    <property type="component" value="Chromosome 16"/>
</dbReference>
<dbReference type="RNAct" id="P56394">
    <property type="molecule type" value="protein"/>
</dbReference>
<dbReference type="Bgee" id="ENSMUSG00000046516">
    <property type="expression patterns" value="Expressed in yolk sac and 253 other cell types or tissues"/>
</dbReference>
<dbReference type="ExpressionAtlas" id="P56394">
    <property type="expression patterns" value="baseline and differential"/>
</dbReference>
<dbReference type="GO" id="GO:0005758">
    <property type="term" value="C:mitochondrial intermembrane space"/>
    <property type="evidence" value="ECO:0007669"/>
    <property type="project" value="UniProtKB-SubCell"/>
</dbReference>
<dbReference type="GO" id="GO:0005739">
    <property type="term" value="C:mitochondrion"/>
    <property type="evidence" value="ECO:0000314"/>
    <property type="project" value="UniProtKB"/>
</dbReference>
<dbReference type="GO" id="GO:0016531">
    <property type="term" value="F:copper chaperone activity"/>
    <property type="evidence" value="ECO:0000250"/>
    <property type="project" value="UniProtKB"/>
</dbReference>
<dbReference type="GO" id="GO:0005507">
    <property type="term" value="F:copper ion binding"/>
    <property type="evidence" value="ECO:0000314"/>
    <property type="project" value="MGI"/>
</dbReference>
<dbReference type="GO" id="GO:1903136">
    <property type="term" value="F:cuprous ion binding"/>
    <property type="evidence" value="ECO:0007669"/>
    <property type="project" value="Ensembl"/>
</dbReference>
<dbReference type="GO" id="GO:0008047">
    <property type="term" value="F:enzyme activator activity"/>
    <property type="evidence" value="ECO:0000315"/>
    <property type="project" value="MGI"/>
</dbReference>
<dbReference type="GO" id="GO:0007507">
    <property type="term" value="P:heart development"/>
    <property type="evidence" value="ECO:0007669"/>
    <property type="project" value="Ensembl"/>
</dbReference>
<dbReference type="GO" id="GO:0033617">
    <property type="term" value="P:mitochondrial cytochrome c oxidase assembly"/>
    <property type="evidence" value="ECO:0000314"/>
    <property type="project" value="UniProtKB"/>
</dbReference>
<dbReference type="GO" id="GO:0008284">
    <property type="term" value="P:positive regulation of cell population proliferation"/>
    <property type="evidence" value="ECO:0007669"/>
    <property type="project" value="Ensembl"/>
</dbReference>
<dbReference type="FunFam" id="1.10.287.1130:FF:000001">
    <property type="entry name" value="cytochrome c oxidase copper chaperone"/>
    <property type="match status" value="1"/>
</dbReference>
<dbReference type="Gene3D" id="1.10.287.1130">
    <property type="entry name" value="CytochromE C oxidase copper chaperone"/>
    <property type="match status" value="1"/>
</dbReference>
<dbReference type="InterPro" id="IPR009069">
    <property type="entry name" value="Cys_alpha_HP_mot_SF"/>
</dbReference>
<dbReference type="InterPro" id="IPR007745">
    <property type="entry name" value="Cyt_c_oxidase_Cu-chaperone"/>
</dbReference>
<dbReference type="PANTHER" id="PTHR16719">
    <property type="entry name" value="CYTOCHROME C OXIDASE COPPER CHAPERONE"/>
    <property type="match status" value="1"/>
</dbReference>
<dbReference type="PANTHER" id="PTHR16719:SF0">
    <property type="entry name" value="CYTOCHROME C OXIDASE COPPER CHAPERONE"/>
    <property type="match status" value="1"/>
</dbReference>
<dbReference type="Pfam" id="PF05051">
    <property type="entry name" value="COX17"/>
    <property type="match status" value="1"/>
</dbReference>
<dbReference type="SUPFAM" id="SSF47072">
    <property type="entry name" value="Cysteine alpha-hairpin motif"/>
    <property type="match status" value="1"/>
</dbReference>
<dbReference type="PROSITE" id="PS51808">
    <property type="entry name" value="CHCH"/>
    <property type="match status" value="1"/>
</dbReference>
<comment type="function">
    <text evidence="4 5">Copper metallochaperone essential for the assembly of the mitochondrial respiratory chain complex IV (CIV), also known as cytochrome c oxidase (PubMed:12370308, PubMed:37813994). Binds two copper ions and delivers them to the metallochaperone SCO1 which transports the copper ions to the Cu(A) site on the cytochrome c oxidase subunit II (MT-CO2/COX2) (PubMed:12370308).</text>
</comment>
<comment type="subunit">
    <text evidence="1">Interacts with COA1. Interacts with the chaperone CHCHD4; this is important for correct folding and the formation of disulfide bonds that stabilize the structure.</text>
</comment>
<comment type="subcellular location">
    <subcellularLocation>
        <location evidence="5">Mitochondrion intermembrane space</location>
    </subcellularLocation>
    <subcellularLocation>
        <location evidence="1">Cytoplasm</location>
    </subcellularLocation>
</comment>
<comment type="PTM">
    <text evidence="5">Acetylation by KAT8 promotes assembly of the mitochondrial respiratory chain complex IV (CIV).</text>
</comment>
<comment type="similarity">
    <text evidence="6">Belongs to the COX17 family.</text>
</comment>
<feature type="chain" id="PRO_0000213539" description="Cytochrome c oxidase copper chaperone">
    <location>
        <begin position="1"/>
        <end position="63"/>
    </location>
</feature>
<feature type="domain" description="CHCH" evidence="2">
    <location>
        <begin position="23"/>
        <end position="63"/>
    </location>
</feature>
<feature type="region of interest" description="Disordered" evidence="3">
    <location>
        <begin position="1"/>
        <end position="20"/>
    </location>
</feature>
<feature type="short sequence motif" description="Cx9C motif 1" evidence="2">
    <location>
        <begin position="26"/>
        <end position="36"/>
    </location>
</feature>
<feature type="short sequence motif" description="Cx9C motif 2" evidence="2">
    <location>
        <begin position="45"/>
        <end position="55"/>
    </location>
</feature>
<feature type="binding site" evidence="4 7">
    <location>
        <position position="23"/>
    </location>
    <ligand>
        <name>Cu cation</name>
        <dbReference type="ChEBI" id="CHEBI:23378"/>
    </ligand>
</feature>
<feature type="binding site" evidence="4 7">
    <location>
        <position position="24"/>
    </location>
    <ligand>
        <name>Cu cation</name>
        <dbReference type="ChEBI" id="CHEBI:23378"/>
    </ligand>
</feature>
<feature type="modified residue" description="N6-acetyllysine" evidence="5">
    <location>
        <position position="18"/>
    </location>
</feature>
<feature type="modified residue" description="N6-acetyllysine" evidence="5">
    <location>
        <position position="30"/>
    </location>
</feature>
<feature type="disulfide bond" evidence="2">
    <location>
        <begin position="26"/>
        <end position="55"/>
    </location>
</feature>
<feature type="disulfide bond" evidence="2">
    <location>
        <begin position="36"/>
        <end position="45"/>
    </location>
</feature>
<feature type="mutagenesis site" description="Mimics acetylation, leading to increased assembly of the mitochondrial respiratory chain complex IV (CIV); when asociated with Q-30." evidence="5">
    <original>K</original>
    <variation>Q</variation>
    <location>
        <position position="18"/>
    </location>
</feature>
<feature type="mutagenesis site" description="Abolished acetylation by KAT8, leading to decreased assembly of the mitochondrial respiratory chain complex IV (CIV); when asociated with R-30." evidence="5">
    <original>K</original>
    <variation>R</variation>
    <location>
        <position position="18"/>
    </location>
</feature>
<feature type="mutagenesis site" description="Significant reduction of copper binding." evidence="5">
    <original>CC</original>
    <variation>AA</variation>
    <location>
        <begin position="23"/>
        <end position="24"/>
    </location>
</feature>
<feature type="mutagenesis site" description="Significant reduction of copper binding; when associated with G-24 and G-26." evidence="4">
    <original>C</original>
    <variation>G</variation>
    <location>
        <position position="23"/>
    </location>
</feature>
<feature type="mutagenesis site" description="Significant reduction of copper binding; when associated with G-23 and G-26." evidence="4">
    <original>C</original>
    <variation>G</variation>
    <location>
        <position position="24"/>
    </location>
</feature>
<feature type="mutagenesis site" description="Significant reduction of copper binding; when associated with G-23 and G-24." evidence="4">
    <original>C</original>
    <variation>G</variation>
    <location>
        <position position="26"/>
    </location>
</feature>
<feature type="mutagenesis site" description="Mimics acetylation, leading to increased assembly of the mitochondrial respiratory chain complex IV (CIV); when asociated with Q-18." evidence="5">
    <original>K</original>
    <variation>Q</variation>
    <location>
        <position position="30"/>
    </location>
</feature>
<feature type="mutagenesis site" description="Abolished acetylation by KAT8, leading to decreased assembly of the mitochondrial respiratory chain complex IV (CIV); when asociated with R-18." evidence="5">
    <original>K</original>
    <variation>R</variation>
    <location>
        <position position="30"/>
    </location>
</feature>
<reference key="1">
    <citation type="submission" date="1996-12" db="EMBL/GenBank/DDBJ databases">
        <authorList>
            <person name="Marra M."/>
            <person name="Hillier L."/>
            <person name="Allen M."/>
            <person name="Bowles M."/>
            <person name="Dietrich N."/>
            <person name="Dubuque T."/>
            <person name="Geisel S."/>
            <person name="Kucaba T."/>
            <person name="Lacy M."/>
            <person name="Le M."/>
            <person name="Martin J."/>
            <person name="Morris M."/>
            <person name="Schellenberg K."/>
            <person name="Steptoe M."/>
            <person name="Tan F."/>
            <person name="Underwood K."/>
            <person name="Moore B."/>
            <person name="Theising B."/>
            <person name="Wylie T."/>
            <person name="Lennon G."/>
            <person name="Soares B."/>
            <person name="Wilson R."/>
            <person name="Waterston R."/>
        </authorList>
    </citation>
    <scope>NUCLEOTIDE SEQUENCE [MRNA]</scope>
</reference>
<reference key="2">
    <citation type="journal article" date="2004" name="Genome Res.">
        <title>The status, quality, and expansion of the NIH full-length cDNA project: the Mammalian Gene Collection (MGC).</title>
        <authorList>
            <consortium name="The MGC Project Team"/>
        </authorList>
    </citation>
    <scope>NUCLEOTIDE SEQUENCE [LARGE SCALE MRNA]</scope>
    <source>
        <tissue>Testis</tissue>
    </source>
</reference>
<reference key="3">
    <citation type="journal article" date="2002" name="Mol. Cell. Biol.">
        <title>Mammalian copper chaperone Cox17p has an essential role in activation of cytochrome C oxidase and embryonic development.</title>
        <authorList>
            <person name="Takahashi Y."/>
            <person name="Kako K."/>
            <person name="Kashiwabara S."/>
            <person name="Takehara A."/>
            <person name="Inada Y."/>
            <person name="Arai H."/>
            <person name="Nakada K."/>
            <person name="Kodama H."/>
            <person name="Hayashi J."/>
            <person name="Baba T."/>
            <person name="Munekata E."/>
        </authorList>
    </citation>
    <scope>FUNCTION</scope>
    <scope>COPPER-BINDING</scope>
    <scope>MUTAGENESIS OF CYS-23; CYS-24 AND CYS-26</scope>
</reference>
<reference key="4">
    <citation type="journal article" date="2010" name="Cell">
        <title>A tissue-specific atlas of mouse protein phosphorylation and expression.</title>
        <authorList>
            <person name="Huttlin E.L."/>
            <person name="Jedrychowski M.P."/>
            <person name="Elias J.E."/>
            <person name="Goswami T."/>
            <person name="Rad R."/>
            <person name="Beausoleil S.A."/>
            <person name="Villen J."/>
            <person name="Haas W."/>
            <person name="Sowa M.E."/>
            <person name="Gygi S.P."/>
        </authorList>
    </citation>
    <scope>IDENTIFICATION BY MASS SPECTROMETRY [LARGE SCALE ANALYSIS]</scope>
    <source>
        <tissue>Brown adipose tissue</tissue>
        <tissue>Heart</tissue>
        <tissue>Kidney</tissue>
        <tissue>Testis</tissue>
    </source>
</reference>
<reference key="5">
    <citation type="journal article" date="2023" name="Nat. Metab.">
        <title>COX17 acetylation via MOF-KANSL complex promotes mitochondrial integrity and function.</title>
        <authorList>
            <person name="Guhathakurta S."/>
            <person name="Erdogdu N.U."/>
            <person name="Hoffmann J.J."/>
            <person name="Grzadzielewska I."/>
            <person name="Schendzielorz A."/>
            <person name="Seyfferth J."/>
            <person name="Maartensson C.U."/>
            <person name="Corrado M."/>
            <person name="Karoutas A."/>
            <person name="Warscheid B."/>
            <person name="Pfanner N."/>
            <person name="Becker T."/>
            <person name="Akhtar A."/>
        </authorList>
    </citation>
    <scope>FUNCTION</scope>
    <scope>SUBCELLULAR LOCATION</scope>
    <scope>ACETYLATION AT LYS-18 AND LYS-30</scope>
    <scope>MUTAGENESIS OF LYS-18; 23-CYS-CYS-24 AND LYS-30</scope>
</reference>
<name>COX17_MOUSE</name>
<protein>
    <recommendedName>
        <fullName>Cytochrome c oxidase copper chaperone</fullName>
    </recommendedName>
</protein>
<evidence type="ECO:0000250" key="1">
    <source>
        <dbReference type="UniProtKB" id="Q14061"/>
    </source>
</evidence>
<evidence type="ECO:0000255" key="2">
    <source>
        <dbReference type="PROSITE-ProRule" id="PRU01150"/>
    </source>
</evidence>
<evidence type="ECO:0000256" key="3">
    <source>
        <dbReference type="SAM" id="MobiDB-lite"/>
    </source>
</evidence>
<evidence type="ECO:0000269" key="4">
    <source>
    </source>
</evidence>
<evidence type="ECO:0000269" key="5">
    <source>
    </source>
</evidence>
<evidence type="ECO:0000305" key="6"/>
<evidence type="ECO:0000305" key="7">
    <source>
    </source>
</evidence>
<organism>
    <name type="scientific">Mus musculus</name>
    <name type="common">Mouse</name>
    <dbReference type="NCBI Taxonomy" id="10090"/>
    <lineage>
        <taxon>Eukaryota</taxon>
        <taxon>Metazoa</taxon>
        <taxon>Chordata</taxon>
        <taxon>Craniata</taxon>
        <taxon>Vertebrata</taxon>
        <taxon>Euteleostomi</taxon>
        <taxon>Mammalia</taxon>
        <taxon>Eutheria</taxon>
        <taxon>Euarchontoglires</taxon>
        <taxon>Glires</taxon>
        <taxon>Rodentia</taxon>
        <taxon>Myomorpha</taxon>
        <taxon>Muroidea</taxon>
        <taxon>Muridae</taxon>
        <taxon>Murinae</taxon>
        <taxon>Mus</taxon>
        <taxon>Mus</taxon>
    </lineage>
</organism>